<accession>Q86XM0</accession>
<accession>Q6ZRP1</accession>
<dbReference type="EMBL" id="AK128088">
    <property type="status" value="NOT_ANNOTATED_CDS"/>
    <property type="molecule type" value="mRNA"/>
</dbReference>
<dbReference type="EMBL" id="AC011499">
    <property type="status" value="NOT_ANNOTATED_CDS"/>
    <property type="molecule type" value="Genomic_DNA"/>
</dbReference>
<dbReference type="EMBL" id="BC043005">
    <property type="protein sequence ID" value="AAH43005.2"/>
    <property type="status" value="ALT_INIT"/>
    <property type="molecule type" value="mRNA"/>
</dbReference>
<dbReference type="CCDS" id="CCDS12149.2">
    <molecule id="Q86XM0-1"/>
</dbReference>
<dbReference type="RefSeq" id="NP_689997.3">
    <molecule id="Q86XM0-1"/>
    <property type="nucleotide sequence ID" value="NM_152784.3"/>
</dbReference>
<dbReference type="SMR" id="Q86XM0"/>
<dbReference type="BioGRID" id="129194">
    <property type="interactions" value="15"/>
</dbReference>
<dbReference type="ComplexPortal" id="CPX-9165">
    <property type="entry name" value="CatSpermasome complex"/>
</dbReference>
<dbReference type="FunCoup" id="Q86XM0">
    <property type="interactions" value="27"/>
</dbReference>
<dbReference type="IntAct" id="Q86XM0">
    <property type="interactions" value="5"/>
</dbReference>
<dbReference type="STRING" id="9606.ENSP00000371037"/>
<dbReference type="TCDB" id="1.A.1.19.1">
    <property type="family name" value="the voltage-gated ion channel (vic) superfamily"/>
</dbReference>
<dbReference type="GlyCosmos" id="Q86XM0">
    <property type="glycosylation" value="6 sites, No reported glycans"/>
</dbReference>
<dbReference type="GlyGen" id="Q86XM0">
    <property type="glycosylation" value="6 sites"/>
</dbReference>
<dbReference type="iPTMnet" id="Q86XM0"/>
<dbReference type="PhosphoSitePlus" id="Q86XM0"/>
<dbReference type="BioMuta" id="CATSPERD"/>
<dbReference type="DMDM" id="147734568"/>
<dbReference type="MassIVE" id="Q86XM0"/>
<dbReference type="PaxDb" id="9606-ENSP00000371037"/>
<dbReference type="PeptideAtlas" id="Q86XM0"/>
<dbReference type="ProteomicsDB" id="70298">
    <molecule id="Q86XM0-1"/>
</dbReference>
<dbReference type="ProteomicsDB" id="70299">
    <molecule id="Q86XM0-2"/>
</dbReference>
<dbReference type="Antibodypedia" id="11727">
    <property type="antibodies" value="49 antibodies from 15 providers"/>
</dbReference>
<dbReference type="DNASU" id="257062"/>
<dbReference type="Ensembl" id="ENST00000381624.4">
    <molecule id="Q86XM0-1"/>
    <property type="protein sequence ID" value="ENSP00000371037.3"/>
    <property type="gene ID" value="ENSG00000174898.16"/>
</dbReference>
<dbReference type="GeneID" id="257062"/>
<dbReference type="KEGG" id="hsa:257062"/>
<dbReference type="MANE-Select" id="ENST00000381624.4">
    <property type="protein sequence ID" value="ENSP00000371037.3"/>
    <property type="RefSeq nucleotide sequence ID" value="NM_152784.4"/>
    <property type="RefSeq protein sequence ID" value="NP_689997.3"/>
</dbReference>
<dbReference type="UCSC" id="uc002mda.4">
    <molecule id="Q86XM0-1"/>
    <property type="organism name" value="human"/>
</dbReference>
<dbReference type="AGR" id="HGNC:28598"/>
<dbReference type="CTD" id="257062"/>
<dbReference type="DisGeNET" id="257062"/>
<dbReference type="GeneCards" id="CATSPERD"/>
<dbReference type="HGNC" id="HGNC:28598">
    <property type="gene designation" value="CATSPERD"/>
</dbReference>
<dbReference type="HPA" id="ENSG00000174898">
    <property type="expression patterns" value="Tissue enriched (testis)"/>
</dbReference>
<dbReference type="MIM" id="617490">
    <property type="type" value="gene"/>
</dbReference>
<dbReference type="neXtProt" id="NX_Q86XM0"/>
<dbReference type="OpenTargets" id="ENSG00000174898"/>
<dbReference type="PharmGKB" id="PA144596254"/>
<dbReference type="VEuPathDB" id="HostDB:ENSG00000174898"/>
<dbReference type="eggNOG" id="ENOG502QSPE">
    <property type="taxonomic scope" value="Eukaryota"/>
</dbReference>
<dbReference type="GeneTree" id="ENSGT00940000162714"/>
<dbReference type="HOGENOM" id="CLU_019182_0_0_1"/>
<dbReference type="InParanoid" id="Q86XM0"/>
<dbReference type="OMA" id="HPYILHH"/>
<dbReference type="OrthoDB" id="8646292at2759"/>
<dbReference type="PAN-GO" id="Q86XM0">
    <property type="GO annotations" value="4 GO annotations based on evolutionary models"/>
</dbReference>
<dbReference type="PhylomeDB" id="Q86XM0"/>
<dbReference type="TreeFam" id="TF337973"/>
<dbReference type="PathwayCommons" id="Q86XM0"/>
<dbReference type="Reactome" id="R-HSA-1300642">
    <property type="pathway name" value="Sperm Motility And Taxes"/>
</dbReference>
<dbReference type="SignaLink" id="Q86XM0"/>
<dbReference type="BioGRID-ORCS" id="257062">
    <property type="hits" value="20 hits in 1143 CRISPR screens"/>
</dbReference>
<dbReference type="ChiTaRS" id="CATSPERD">
    <property type="organism name" value="human"/>
</dbReference>
<dbReference type="GenomeRNAi" id="257062"/>
<dbReference type="Pharos" id="Q86XM0">
    <property type="development level" value="Tdark"/>
</dbReference>
<dbReference type="PRO" id="PR:Q86XM0"/>
<dbReference type="Proteomes" id="UP000005640">
    <property type="component" value="Chromosome 19"/>
</dbReference>
<dbReference type="RNAct" id="Q86XM0">
    <property type="molecule type" value="protein"/>
</dbReference>
<dbReference type="Bgee" id="ENSG00000174898">
    <property type="expression patterns" value="Expressed in bronchial epithelial cell and 96 other cell types or tissues"/>
</dbReference>
<dbReference type="GO" id="GO:0036128">
    <property type="term" value="C:CatSper complex"/>
    <property type="evidence" value="ECO:0000250"/>
    <property type="project" value="UniProtKB"/>
</dbReference>
<dbReference type="GO" id="GO:0005886">
    <property type="term" value="C:plasma membrane"/>
    <property type="evidence" value="ECO:0000304"/>
    <property type="project" value="Reactome"/>
</dbReference>
<dbReference type="GO" id="GO:0097228">
    <property type="term" value="C:sperm principal piece"/>
    <property type="evidence" value="ECO:0000250"/>
    <property type="project" value="UniProtKB"/>
</dbReference>
<dbReference type="GO" id="GO:0030317">
    <property type="term" value="P:flagellated sperm motility"/>
    <property type="evidence" value="ECO:0000250"/>
    <property type="project" value="UniProtKB"/>
</dbReference>
<dbReference type="GO" id="GO:0048240">
    <property type="term" value="P:sperm capacitation"/>
    <property type="evidence" value="ECO:0000250"/>
    <property type="project" value="UniProtKB"/>
</dbReference>
<dbReference type="GO" id="GO:0007283">
    <property type="term" value="P:spermatogenesis"/>
    <property type="evidence" value="ECO:0000250"/>
    <property type="project" value="UniProtKB"/>
</dbReference>
<dbReference type="InterPro" id="IPR028751">
    <property type="entry name" value="CATSPERD/E"/>
</dbReference>
<dbReference type="InterPro" id="IPR053814">
    <property type="entry name" value="CATSPERD/E_C"/>
</dbReference>
<dbReference type="InterPro" id="IPR053813">
    <property type="entry name" value="CATSPERD_b-prop"/>
</dbReference>
<dbReference type="InterPro" id="IPR055451">
    <property type="entry name" value="Ig-like_CATSPERD"/>
</dbReference>
<dbReference type="PANTHER" id="PTHR33722:SF1">
    <property type="entry name" value="CATION CHANNEL SPERM-ASSOCIATED AUXILIARY SUBUNIT DELTA"/>
    <property type="match status" value="1"/>
</dbReference>
<dbReference type="PANTHER" id="PTHR33722">
    <property type="entry name" value="CATION CHANNEL SPERM-ASSOCIATED PROTEIN SUBUNIT DELTA-RELATED"/>
    <property type="match status" value="1"/>
</dbReference>
<dbReference type="Pfam" id="PF15020">
    <property type="entry name" value="Beta-prop_CATSPERD"/>
    <property type="match status" value="1"/>
</dbReference>
<dbReference type="Pfam" id="PF22850">
    <property type="entry name" value="CATSPERD-E_C"/>
    <property type="match status" value="1"/>
</dbReference>
<dbReference type="Pfam" id="PF23747">
    <property type="entry name" value="Ig-like_CATSPERD"/>
    <property type="match status" value="1"/>
</dbReference>
<feature type="signal peptide" evidence="3">
    <location>
        <begin position="1"/>
        <end position="20"/>
    </location>
</feature>
<feature type="chain" id="PRO_0000287150" description="Cation channel sperm-associated auxiliary subunit delta">
    <location>
        <begin position="21"/>
        <end position="798"/>
    </location>
</feature>
<feature type="topological domain" description="Extracellular" evidence="1">
    <location>
        <begin position="21"/>
        <end position="723"/>
    </location>
</feature>
<feature type="transmembrane region" description="Helical" evidence="1">
    <location>
        <begin position="724"/>
        <end position="745"/>
    </location>
</feature>
<feature type="topological domain" description="Cytoplasmic" evidence="1">
    <location>
        <begin position="746"/>
        <end position="798"/>
    </location>
</feature>
<feature type="glycosylation site" description="N-linked (GlcNAc...) asparagine" evidence="3">
    <location>
        <position position="123"/>
    </location>
</feature>
<feature type="glycosylation site" description="N-linked (GlcNAc...) asparagine" evidence="3">
    <location>
        <position position="230"/>
    </location>
</feature>
<feature type="glycosylation site" description="N-linked (GlcNAc...) asparagine" evidence="3">
    <location>
        <position position="240"/>
    </location>
</feature>
<feature type="glycosylation site" description="N-linked (GlcNAc...) asparagine" evidence="3">
    <location>
        <position position="472"/>
    </location>
</feature>
<feature type="glycosylation site" description="N-linked (GlcNAc...) asparagine" evidence="3">
    <location>
        <position position="538"/>
    </location>
</feature>
<feature type="glycosylation site" description="N-linked (GlcNAc...) asparagine" evidence="3">
    <location>
        <position position="630"/>
    </location>
</feature>
<feature type="disulfide bond" evidence="1">
    <location>
        <begin position="23"/>
        <end position="369"/>
    </location>
</feature>
<feature type="disulfide bond" evidence="1">
    <location>
        <begin position="59"/>
        <end position="145"/>
    </location>
</feature>
<feature type="disulfide bond" evidence="1">
    <location>
        <begin position="144"/>
        <end position="152"/>
    </location>
</feature>
<feature type="disulfide bond" evidence="1">
    <location>
        <begin position="387"/>
        <end position="496"/>
    </location>
</feature>
<feature type="disulfide bond" evidence="1">
    <location>
        <begin position="510"/>
        <end position="701"/>
    </location>
</feature>
<feature type="disulfide bond" evidence="1">
    <location>
        <begin position="525"/>
        <end position="572"/>
    </location>
</feature>
<feature type="disulfide bond" evidence="1">
    <location>
        <begin position="624"/>
        <end position="652"/>
    </location>
</feature>
<feature type="splice variant" id="VSP_025344" description="In isoform 2." evidence="5">
    <location>
        <begin position="1"/>
        <end position="342"/>
    </location>
</feature>
<feature type="splice variant" id="VSP_025345" description="In isoform 2." evidence="5">
    <original>WRKDSFQEVIDAEYVLLEVNGQFSYSYSLTAQSAMCTSQPQNWTTMIKEFGGPFFWNRENYVSCHDPNNNAPLRWPDVQYQILGGRTANQIIFGHNGFYVFYISIVDPYYSY</original>
    <variation>LECSGMNTVHCSLNLPGSSGPPASASQVAGTAVAYHNARLIFFFFFFFFLRQSLALSPRLECSGVILAHRKLRLPGSRHSPASASRVAGITGARHCARLIFFIFSRDRVSPC</variation>
    <location>
        <begin position="589"/>
        <end position="700"/>
    </location>
</feature>
<feature type="splice variant" id="VSP_025346" description="In isoform 2." evidence="5">
    <location>
        <begin position="701"/>
        <end position="798"/>
    </location>
</feature>
<feature type="sequence variant" id="VAR_061714" description="In dbSNP:rs57680462.">
    <original>M</original>
    <variation>T</variation>
    <location>
        <position position="212"/>
    </location>
</feature>
<feature type="sequence variant" id="VAR_032270" description="In dbSNP:rs17854252." evidence="4">
    <original>T</original>
    <variation>A</variation>
    <location>
        <position position="504"/>
    </location>
</feature>
<feature type="sequence variant" id="VAR_032271" description="In dbSNP:rs2305925.">
    <original>T</original>
    <variation>S</variation>
    <location>
        <position position="743"/>
    </location>
</feature>
<keyword id="KW-0025">Alternative splicing</keyword>
<keyword id="KW-1003">Cell membrane</keyword>
<keyword id="KW-0966">Cell projection</keyword>
<keyword id="KW-0969">Cilium</keyword>
<keyword id="KW-0217">Developmental protein</keyword>
<keyword id="KW-0221">Differentiation</keyword>
<keyword id="KW-1015">Disulfide bond</keyword>
<keyword id="KW-0282">Flagellum</keyword>
<keyword id="KW-0325">Glycoprotein</keyword>
<keyword id="KW-0472">Membrane</keyword>
<keyword id="KW-1267">Proteomics identification</keyword>
<keyword id="KW-1185">Reference proteome</keyword>
<keyword id="KW-0732">Signal</keyword>
<keyword id="KW-0744">Spermatogenesis</keyword>
<keyword id="KW-0812">Transmembrane</keyword>
<keyword id="KW-1133">Transmembrane helix</keyword>
<evidence type="ECO:0000250" key="1">
    <source>
        <dbReference type="UniProtKB" id="E9Q9F6"/>
    </source>
</evidence>
<evidence type="ECO:0000250" key="2">
    <source>
        <dbReference type="UniProtKB" id="Q91ZR5"/>
    </source>
</evidence>
<evidence type="ECO:0000255" key="3"/>
<evidence type="ECO:0000269" key="4">
    <source>
    </source>
</evidence>
<evidence type="ECO:0000303" key="5">
    <source>
    </source>
</evidence>
<evidence type="ECO:0000305" key="6"/>
<evidence type="ECO:0000312" key="7">
    <source>
        <dbReference type="HGNC" id="HGNC:28598"/>
    </source>
</evidence>
<protein>
    <recommendedName>
        <fullName evidence="7">Cation channel sperm-associated auxiliary subunit delta</fullName>
        <shortName>CatSper-delta</shortName>
        <shortName>CatSperdelta</shortName>
    </recommendedName>
    <alternativeName>
        <fullName>Transmembrane protein 146</fullName>
    </alternativeName>
</protein>
<name>CTSRD_HUMAN</name>
<proteinExistence type="evidence at protein level"/>
<organism>
    <name type="scientific">Homo sapiens</name>
    <name type="common">Human</name>
    <dbReference type="NCBI Taxonomy" id="9606"/>
    <lineage>
        <taxon>Eukaryota</taxon>
        <taxon>Metazoa</taxon>
        <taxon>Chordata</taxon>
        <taxon>Craniata</taxon>
        <taxon>Vertebrata</taxon>
        <taxon>Euteleostomi</taxon>
        <taxon>Mammalia</taxon>
        <taxon>Eutheria</taxon>
        <taxon>Euarchontoglires</taxon>
        <taxon>Primates</taxon>
        <taxon>Haplorrhini</taxon>
        <taxon>Catarrhini</taxon>
        <taxon>Hominidae</taxon>
        <taxon>Homo</taxon>
    </lineage>
</organism>
<gene>
    <name evidence="7" type="primary">CATSPERD</name>
    <name type="synonym">TMEM146</name>
</gene>
<comment type="function">
    <text evidence="1">Auxiliary component of the CatSper complex, a complex involved in sperm cell hyperactivation. Sperm cell hyperactivation is needed for sperm motility which is essential late in the preparation of sperm for fertilization. Required for CATSPER1 stability before intraflagellar transport and/or incorporation of the CatSper complex channel into the flagellar membrane.</text>
</comment>
<comment type="subunit">
    <text evidence="1 2">Component of the CatSper complex or CatSpermasome composed of the core pore-forming members CATSPER1, CATSPER2, CATSPER3 and CATSPER4 as well as auxiliary members CATSPERB, CATSPERG, CATSPERD, CATSPERE, CATSPERZ, C2CD6/CATSPERT, TMEM249, TMEM262 and EFCAB9 (By similarity). HSPA1 may be an additional auxiliary complex member (By similarity). The core complex members CATSPER1, CATSPER2, CATSPER3 and CATSPER4 form a heterotetrameric channel. The auxiliary CATSPERB, CATSPERG, CATSPERD and CATSPERE subunits form a pavilion-like structure over the pore which stabilizes the complex through interactions with CATSPER4, CATSPER3, CATSPER1 and CATSPER2 respectively. TMEM262/CATSPERH interacts with CATSPERB, further stabilizing the complex. C2CD6/CATSPERT interacts at least with CATSPERD and is required for targeting the CatSper complex in the flagellar membrane (By similarity).</text>
</comment>
<comment type="interaction">
    <interactant intactId="EBI-10260328">
        <id>Q86XM0</id>
    </interactant>
    <interactant intactId="EBI-11282723">
        <id>Q9Y5Z0</id>
        <label>BACE2</label>
    </interactant>
    <organismsDiffer>false</organismsDiffer>
    <experiments>3</experiments>
</comment>
<comment type="interaction">
    <interactant intactId="EBI-10260328">
        <id>Q86XM0</id>
    </interactant>
    <interactant intactId="EBI-3915568">
        <id>P50747</id>
        <label>HLCS</label>
    </interactant>
    <organismsDiffer>false</organismsDiffer>
    <experiments>2</experiments>
</comment>
<comment type="interaction">
    <interactant intactId="EBI-10260328">
        <id>Q86XM0</id>
    </interactant>
    <interactant intactId="EBI-2432309">
        <id>Q92876</id>
        <label>KLK6</label>
    </interactant>
    <organismsDiffer>false</organismsDiffer>
    <experiments>3</experiments>
</comment>
<comment type="interaction">
    <interactant intactId="EBI-10260328">
        <id>Q86XM0</id>
    </interactant>
    <interactant intactId="EBI-739832">
        <id>Q8TBB1</id>
        <label>LNX1</label>
    </interactant>
    <organismsDiffer>false</organismsDiffer>
    <experiments>3</experiments>
</comment>
<comment type="subcellular location">
    <subcellularLocation>
        <location evidence="1">Cell projection</location>
        <location evidence="1">Cilium</location>
        <location evidence="1">Flagellum membrane</location>
        <topology evidence="3">Single-pass type I membrane protein</topology>
    </subcellularLocation>
    <text evidence="1">Specifically located in the principal piece of sperm tail.</text>
</comment>
<comment type="alternative products">
    <event type="alternative splicing"/>
    <isoform>
        <id>Q86XM0-1</id>
        <name>1</name>
        <sequence type="displayed"/>
    </isoform>
    <isoform>
        <id>Q86XM0-2</id>
        <name>2</name>
        <sequence type="described" ref="VSP_025344 VSP_025345 VSP_025346"/>
    </isoform>
</comment>
<comment type="similarity">
    <text evidence="6">Belongs to the CATSPERD family.</text>
</comment>
<comment type="caution">
    <text evidence="6">It is uncertain whether Met-1 or Met-5 is the initiator.</text>
</comment>
<comment type="caution">
    <text evidence="6">In mouse, Slco6c1 is an additional auxiliary subunit of the CatSper complex. It is unclear if the related SLCO6A1 protein performs the same role in non-rodent species.</text>
</comment>
<comment type="sequence caution" evidence="6">
    <conflict type="erroneous initiation">
        <sequence resource="EMBL-CDS" id="AAH43005"/>
    </conflict>
</comment>
<sequence length="798" mass="90468">MLMLMLVAAVTMWLRPLVTAQLCRSRTVRTGKVFNLIQDVQGDRLYFHPTTTRLIKHPCEKNIALYLGKQVFFTMDNFETSLLPFTIPTSMQVGVPEVTSAHFAGSLLLLVVDQKVYIYDYENNSWSMSLGIKHPVTHVSGDNCCYTGSLFCVHVSNLVFAYFRGDQISQTYIYYSNTGGFSFWKYHYDRQAEIIGSLGGIFHFFSLSQVAMLVVNQGKGMFKYSDHPLNRSFGLSFDYNGTLDILIAPGQRGILLLWFENSLLFSHNAGQLVDTVRVKKGDQTLFSSIFEAKITIHNIAVTENELAVITREDNLYYGNLGIVPSSIIKFADQYIWSEDVALMFRSPGTLEILTPLRDTAFPAFDFQKCLVNIQALLMDPELHVGKCKIEFLTGEFIYRMYTIDMHSQLELTASLIPQPGTSLIPLVMVSNPHSLGFQATFYENGYTSDGNTKYKLDIFLKQQQHWGRTDSNFTSSLKKATMSTLTVDIANKEISCVDIKPLSTLISVGCDLDKKIVIQNKVSACSMGILDPLTLQDNYSFIIEKEFYDPGFQGQQSSEDLHVFYSYQQLGCPLLVYYDTLWKPVVELWRKDSFQEVIDAEYVLLEVNGQFSYSYSLTAQSAMCTSQPQNWTTMIKEFGGPFFWNRENYVSCHDPNNNAPLRWPDVQYQILGGRTANQIIFGHNGFYVFYISIVDPYYSYCQLETIFSIYVYGAFPVQLVSAGVVILLIISSILGSVWLAYKTPKLLRTARGRRIKKCATQLCRRCKTVCQFRASATARAGTEPPGRHRTPHGGRSDH</sequence>
<reference key="1">
    <citation type="journal article" date="2004" name="Nat. Genet.">
        <title>Complete sequencing and characterization of 21,243 full-length human cDNAs.</title>
        <authorList>
            <person name="Ota T."/>
            <person name="Suzuki Y."/>
            <person name="Nishikawa T."/>
            <person name="Otsuki T."/>
            <person name="Sugiyama T."/>
            <person name="Irie R."/>
            <person name="Wakamatsu A."/>
            <person name="Hayashi K."/>
            <person name="Sato H."/>
            <person name="Nagai K."/>
            <person name="Kimura K."/>
            <person name="Makita H."/>
            <person name="Sekine M."/>
            <person name="Obayashi M."/>
            <person name="Nishi T."/>
            <person name="Shibahara T."/>
            <person name="Tanaka T."/>
            <person name="Ishii S."/>
            <person name="Yamamoto J."/>
            <person name="Saito K."/>
            <person name="Kawai Y."/>
            <person name="Isono Y."/>
            <person name="Nakamura Y."/>
            <person name="Nagahari K."/>
            <person name="Murakami K."/>
            <person name="Yasuda T."/>
            <person name="Iwayanagi T."/>
            <person name="Wagatsuma M."/>
            <person name="Shiratori A."/>
            <person name="Sudo H."/>
            <person name="Hosoiri T."/>
            <person name="Kaku Y."/>
            <person name="Kodaira H."/>
            <person name="Kondo H."/>
            <person name="Sugawara M."/>
            <person name="Takahashi M."/>
            <person name="Kanda K."/>
            <person name="Yokoi T."/>
            <person name="Furuya T."/>
            <person name="Kikkawa E."/>
            <person name="Omura Y."/>
            <person name="Abe K."/>
            <person name="Kamihara K."/>
            <person name="Katsuta N."/>
            <person name="Sato K."/>
            <person name="Tanikawa M."/>
            <person name="Yamazaki M."/>
            <person name="Ninomiya K."/>
            <person name="Ishibashi T."/>
            <person name="Yamashita H."/>
            <person name="Murakawa K."/>
            <person name="Fujimori K."/>
            <person name="Tanai H."/>
            <person name="Kimata M."/>
            <person name="Watanabe M."/>
            <person name="Hiraoka S."/>
            <person name="Chiba Y."/>
            <person name="Ishida S."/>
            <person name="Ono Y."/>
            <person name="Takiguchi S."/>
            <person name="Watanabe S."/>
            <person name="Yosida M."/>
            <person name="Hotuta T."/>
            <person name="Kusano J."/>
            <person name="Kanehori K."/>
            <person name="Takahashi-Fujii A."/>
            <person name="Hara H."/>
            <person name="Tanase T.-O."/>
            <person name="Nomura Y."/>
            <person name="Togiya S."/>
            <person name="Komai F."/>
            <person name="Hara R."/>
            <person name="Takeuchi K."/>
            <person name="Arita M."/>
            <person name="Imose N."/>
            <person name="Musashino K."/>
            <person name="Yuuki H."/>
            <person name="Oshima A."/>
            <person name="Sasaki N."/>
            <person name="Aotsuka S."/>
            <person name="Yoshikawa Y."/>
            <person name="Matsunawa H."/>
            <person name="Ichihara T."/>
            <person name="Shiohata N."/>
            <person name="Sano S."/>
            <person name="Moriya S."/>
            <person name="Momiyama H."/>
            <person name="Satoh N."/>
            <person name="Takami S."/>
            <person name="Terashima Y."/>
            <person name="Suzuki O."/>
            <person name="Nakagawa S."/>
            <person name="Senoh A."/>
            <person name="Mizoguchi H."/>
            <person name="Goto Y."/>
            <person name="Shimizu F."/>
            <person name="Wakebe H."/>
            <person name="Hishigaki H."/>
            <person name="Watanabe T."/>
            <person name="Sugiyama A."/>
            <person name="Takemoto M."/>
            <person name="Kawakami B."/>
            <person name="Yamazaki M."/>
            <person name="Watanabe K."/>
            <person name="Kumagai A."/>
            <person name="Itakura S."/>
            <person name="Fukuzumi Y."/>
            <person name="Fujimori Y."/>
            <person name="Komiyama M."/>
            <person name="Tashiro H."/>
            <person name="Tanigami A."/>
            <person name="Fujiwara T."/>
            <person name="Ono T."/>
            <person name="Yamada K."/>
            <person name="Fujii Y."/>
            <person name="Ozaki K."/>
            <person name="Hirao M."/>
            <person name="Ohmori Y."/>
            <person name="Kawabata A."/>
            <person name="Hikiji T."/>
            <person name="Kobatake N."/>
            <person name="Inagaki H."/>
            <person name="Ikema Y."/>
            <person name="Okamoto S."/>
            <person name="Okitani R."/>
            <person name="Kawakami T."/>
            <person name="Noguchi S."/>
            <person name="Itoh T."/>
            <person name="Shigeta K."/>
            <person name="Senba T."/>
            <person name="Matsumura K."/>
            <person name="Nakajima Y."/>
            <person name="Mizuno T."/>
            <person name="Morinaga M."/>
            <person name="Sasaki M."/>
            <person name="Togashi T."/>
            <person name="Oyama M."/>
            <person name="Hata H."/>
            <person name="Watanabe M."/>
            <person name="Komatsu T."/>
            <person name="Mizushima-Sugano J."/>
            <person name="Satoh T."/>
            <person name="Shirai Y."/>
            <person name="Takahashi Y."/>
            <person name="Nakagawa K."/>
            <person name="Okumura K."/>
            <person name="Nagase T."/>
            <person name="Nomura N."/>
            <person name="Kikuchi H."/>
            <person name="Masuho Y."/>
            <person name="Yamashita R."/>
            <person name="Nakai K."/>
            <person name="Yada T."/>
            <person name="Nakamura Y."/>
            <person name="Ohara O."/>
            <person name="Isogai T."/>
            <person name="Sugano S."/>
        </authorList>
    </citation>
    <scope>NUCLEOTIDE SEQUENCE [LARGE SCALE MRNA] (ISOFORM 2)</scope>
    <source>
        <tissue>Testis</tissue>
    </source>
</reference>
<reference key="2">
    <citation type="journal article" date="2004" name="Nature">
        <title>The DNA sequence and biology of human chromosome 19.</title>
        <authorList>
            <person name="Grimwood J."/>
            <person name="Gordon L.A."/>
            <person name="Olsen A.S."/>
            <person name="Terry A."/>
            <person name="Schmutz J."/>
            <person name="Lamerdin J.E."/>
            <person name="Hellsten U."/>
            <person name="Goodstein D."/>
            <person name="Couronne O."/>
            <person name="Tran-Gyamfi M."/>
            <person name="Aerts A."/>
            <person name="Altherr M."/>
            <person name="Ashworth L."/>
            <person name="Bajorek E."/>
            <person name="Black S."/>
            <person name="Branscomb E."/>
            <person name="Caenepeel S."/>
            <person name="Carrano A.V."/>
            <person name="Caoile C."/>
            <person name="Chan Y.M."/>
            <person name="Christensen M."/>
            <person name="Cleland C.A."/>
            <person name="Copeland A."/>
            <person name="Dalin E."/>
            <person name="Dehal P."/>
            <person name="Denys M."/>
            <person name="Detter J.C."/>
            <person name="Escobar J."/>
            <person name="Flowers D."/>
            <person name="Fotopulos D."/>
            <person name="Garcia C."/>
            <person name="Georgescu A.M."/>
            <person name="Glavina T."/>
            <person name="Gomez M."/>
            <person name="Gonzales E."/>
            <person name="Groza M."/>
            <person name="Hammon N."/>
            <person name="Hawkins T."/>
            <person name="Haydu L."/>
            <person name="Ho I."/>
            <person name="Huang W."/>
            <person name="Israni S."/>
            <person name="Jett J."/>
            <person name="Kadner K."/>
            <person name="Kimball H."/>
            <person name="Kobayashi A."/>
            <person name="Larionov V."/>
            <person name="Leem S.-H."/>
            <person name="Lopez F."/>
            <person name="Lou Y."/>
            <person name="Lowry S."/>
            <person name="Malfatti S."/>
            <person name="Martinez D."/>
            <person name="McCready P.M."/>
            <person name="Medina C."/>
            <person name="Morgan J."/>
            <person name="Nelson K."/>
            <person name="Nolan M."/>
            <person name="Ovcharenko I."/>
            <person name="Pitluck S."/>
            <person name="Pollard M."/>
            <person name="Popkie A.P."/>
            <person name="Predki P."/>
            <person name="Quan G."/>
            <person name="Ramirez L."/>
            <person name="Rash S."/>
            <person name="Retterer J."/>
            <person name="Rodriguez A."/>
            <person name="Rogers S."/>
            <person name="Salamov A."/>
            <person name="Salazar A."/>
            <person name="She X."/>
            <person name="Smith D."/>
            <person name="Slezak T."/>
            <person name="Solovyev V."/>
            <person name="Thayer N."/>
            <person name="Tice H."/>
            <person name="Tsai M."/>
            <person name="Ustaszewska A."/>
            <person name="Vo N."/>
            <person name="Wagner M."/>
            <person name="Wheeler J."/>
            <person name="Wu K."/>
            <person name="Xie G."/>
            <person name="Yang J."/>
            <person name="Dubchak I."/>
            <person name="Furey T.S."/>
            <person name="DeJong P."/>
            <person name="Dickson M."/>
            <person name="Gordon D."/>
            <person name="Eichler E.E."/>
            <person name="Pennacchio L.A."/>
            <person name="Richardson P."/>
            <person name="Stubbs L."/>
            <person name="Rokhsar D.S."/>
            <person name="Myers R.M."/>
            <person name="Rubin E.M."/>
            <person name="Lucas S.M."/>
        </authorList>
    </citation>
    <scope>NUCLEOTIDE SEQUENCE [LARGE SCALE GENOMIC DNA]</scope>
</reference>
<reference key="3">
    <citation type="journal article" date="2004" name="Genome Res.">
        <title>The status, quality, and expansion of the NIH full-length cDNA project: the Mammalian Gene Collection (MGC).</title>
        <authorList>
            <consortium name="The MGC Project Team"/>
        </authorList>
    </citation>
    <scope>NUCLEOTIDE SEQUENCE [LARGE SCALE MRNA] (ISOFORM 1)</scope>
    <scope>VARIANT ALA-504</scope>
    <source>
        <tissue>Testis</tissue>
    </source>
</reference>